<protein>
    <recommendedName>
        <fullName>Probable 26S proteasome regulatory subunit rpn-6.2</fullName>
    </recommendedName>
</protein>
<keyword id="KW-0025">Alternative splicing</keyword>
<keyword id="KW-0647">Proteasome</keyword>
<keyword id="KW-1185">Reference proteome</keyword>
<feature type="chain" id="PRO_0000065379" description="Probable 26S proteasome regulatory subunit rpn-6.2">
    <location>
        <begin position="1"/>
        <end position="416"/>
    </location>
</feature>
<feature type="domain" description="PCI" evidence="2">
    <location>
        <begin position="217"/>
        <end position="386"/>
    </location>
</feature>
<feature type="splice variant" id="VSP_039826" description="In isoform b." evidence="3">
    <location>
        <begin position="1"/>
        <end position="203"/>
    </location>
</feature>
<name>PS11B_CAEEL</name>
<accession>P34481</accession>
<accession>C0P266</accession>
<accession>C0P267</accession>
<comment type="function">
    <text evidence="1">Component of the lid subcomplex of the 26S proteasome, a multiprotein complex involved in the ATP-dependent degradation of ubiquitinated proteins. In the complex, rpn-6.2 is required for proteasome assembly (By similarity).</text>
</comment>
<comment type="subunit">
    <text evidence="1">Component of the lid subcomplex of the 19S proteasome regulatory particle complex (also named PA700 complex). The 26S proteasome consists of a 20S proteasome core and two 19S regulatory subunits (By similarity).</text>
</comment>
<comment type="alternative products">
    <event type="alternative splicing"/>
    <isoform>
        <id>P34481-1</id>
        <name>a</name>
        <sequence type="displayed"/>
    </isoform>
    <isoform>
        <id>P34481-2</id>
        <name>b</name>
        <sequence type="described" ref="VSP_039826"/>
    </isoform>
</comment>
<comment type="similarity">
    <text evidence="3">Belongs to the proteasome subunit S9 family.</text>
</comment>
<proteinExistence type="inferred from homology"/>
<dbReference type="EMBL" id="Z11505">
    <property type="protein sequence ID" value="CAX51679.1"/>
    <property type="molecule type" value="Genomic_DNA"/>
</dbReference>
<dbReference type="EMBL" id="Z11505">
    <property type="protein sequence ID" value="CAX51680.1"/>
    <property type="molecule type" value="Genomic_DNA"/>
</dbReference>
<dbReference type="PIR" id="S31125">
    <property type="entry name" value="S31125"/>
</dbReference>
<dbReference type="RefSeq" id="NP_001254972.1">
    <molecule id="P34481-1"/>
    <property type="nucleotide sequence ID" value="NM_001268043.2"/>
</dbReference>
<dbReference type="RefSeq" id="NP_001254973.1">
    <molecule id="P34481-2"/>
    <property type="nucleotide sequence ID" value="NM_001268044.3"/>
</dbReference>
<dbReference type="SMR" id="P34481"/>
<dbReference type="FunCoup" id="P34481">
    <property type="interactions" value="51"/>
</dbReference>
<dbReference type="STRING" id="6239.F59B2.5a.1"/>
<dbReference type="PaxDb" id="6239-F59B2.5a"/>
<dbReference type="PeptideAtlas" id="P34481"/>
<dbReference type="EnsemblMetazoa" id="F59B2.5a.1">
    <molecule id="P34481-1"/>
    <property type="protein sequence ID" value="F59B2.5a.1"/>
    <property type="gene ID" value="WBGene00010309"/>
</dbReference>
<dbReference type="EnsemblMetazoa" id="F59B2.5b.1">
    <molecule id="P34481-2"/>
    <property type="protein sequence ID" value="F59B2.5b.1"/>
    <property type="gene ID" value="WBGene00010309"/>
</dbReference>
<dbReference type="GeneID" id="176273"/>
<dbReference type="KEGG" id="cel:CELE_F59B2.5"/>
<dbReference type="UCSC" id="F59B2.5">
    <molecule id="P34481-1"/>
    <property type="organism name" value="c. elegans"/>
</dbReference>
<dbReference type="AGR" id="WB:WBGene00010309"/>
<dbReference type="CTD" id="176273"/>
<dbReference type="WormBase" id="F59B2.5a">
    <molecule id="P34481-1"/>
    <property type="protein sequence ID" value="CE43506"/>
    <property type="gene ID" value="WBGene00010309"/>
    <property type="gene designation" value="rpn-6.2"/>
</dbReference>
<dbReference type="WormBase" id="F59B2.5b">
    <molecule id="P34481-2"/>
    <property type="protein sequence ID" value="CE43486"/>
    <property type="gene ID" value="WBGene00010309"/>
    <property type="gene designation" value="rpn-6.2"/>
</dbReference>
<dbReference type="eggNOG" id="KOG1463">
    <property type="taxonomic scope" value="Eukaryota"/>
</dbReference>
<dbReference type="GeneTree" id="ENSGT00530000063301"/>
<dbReference type="HOGENOM" id="CLU_029573_2_1_1"/>
<dbReference type="InParanoid" id="P34481"/>
<dbReference type="OMA" id="MILCKIM"/>
<dbReference type="OrthoDB" id="1418352at2759"/>
<dbReference type="PhylomeDB" id="P34481"/>
<dbReference type="PRO" id="PR:P34481"/>
<dbReference type="Proteomes" id="UP000001940">
    <property type="component" value="Chromosome III"/>
</dbReference>
<dbReference type="Bgee" id="WBGene00010309">
    <property type="expression patterns" value="Expressed in germ line (C elegans) and 4 other cell types or tissues"/>
</dbReference>
<dbReference type="GO" id="GO:0008541">
    <property type="term" value="C:proteasome regulatory particle, lid subcomplex"/>
    <property type="evidence" value="ECO:0000318"/>
    <property type="project" value="GO_Central"/>
</dbReference>
<dbReference type="GO" id="GO:0005198">
    <property type="term" value="F:structural molecule activity"/>
    <property type="evidence" value="ECO:0000318"/>
    <property type="project" value="GO_Central"/>
</dbReference>
<dbReference type="GO" id="GO:0006511">
    <property type="term" value="P:ubiquitin-dependent protein catabolic process"/>
    <property type="evidence" value="ECO:0000318"/>
    <property type="project" value="GO_Central"/>
</dbReference>
<dbReference type="FunFam" id="1.25.40.570:FF:000019">
    <property type="entry name" value="Proteasome regulatory non-ATPase subunit 6"/>
    <property type="match status" value="1"/>
</dbReference>
<dbReference type="Gene3D" id="1.25.40.570">
    <property type="match status" value="1"/>
</dbReference>
<dbReference type="InterPro" id="IPR050871">
    <property type="entry name" value="26S_Proteasome/COP9_Components"/>
</dbReference>
<dbReference type="InterPro" id="IPR000717">
    <property type="entry name" value="PCI_dom"/>
</dbReference>
<dbReference type="InterPro" id="IPR040773">
    <property type="entry name" value="Rpn6_N"/>
</dbReference>
<dbReference type="InterPro" id="IPR036390">
    <property type="entry name" value="WH_DNA-bd_sf"/>
</dbReference>
<dbReference type="PANTHER" id="PTHR10678">
    <property type="entry name" value="26S PROTEASOME NON-ATPASE REGULATORY SUBUNIT 11/COP9 SIGNALOSOME COMPLEX SUBUNIT 2"/>
    <property type="match status" value="1"/>
</dbReference>
<dbReference type="Pfam" id="PF01399">
    <property type="entry name" value="PCI"/>
    <property type="match status" value="1"/>
</dbReference>
<dbReference type="Pfam" id="PF18055">
    <property type="entry name" value="RPN6_N"/>
    <property type="match status" value="1"/>
</dbReference>
<dbReference type="SMART" id="SM00753">
    <property type="entry name" value="PAM"/>
    <property type="match status" value="1"/>
</dbReference>
<dbReference type="SMART" id="SM00088">
    <property type="entry name" value="PINT"/>
    <property type="match status" value="1"/>
</dbReference>
<dbReference type="SUPFAM" id="SSF46785">
    <property type="entry name" value="Winged helix' DNA-binding domain"/>
    <property type="match status" value="1"/>
</dbReference>
<dbReference type="PROSITE" id="PS50250">
    <property type="entry name" value="PCI"/>
    <property type="match status" value="1"/>
</dbReference>
<organism>
    <name type="scientific">Caenorhabditis elegans</name>
    <dbReference type="NCBI Taxonomy" id="6239"/>
    <lineage>
        <taxon>Eukaryota</taxon>
        <taxon>Metazoa</taxon>
        <taxon>Ecdysozoa</taxon>
        <taxon>Nematoda</taxon>
        <taxon>Chromadorea</taxon>
        <taxon>Rhabditida</taxon>
        <taxon>Rhabditina</taxon>
        <taxon>Rhabditomorpha</taxon>
        <taxon>Rhabditoidea</taxon>
        <taxon>Rhabditidae</taxon>
        <taxon>Peloderinae</taxon>
        <taxon>Caenorhabditis</taxon>
    </lineage>
</organism>
<gene>
    <name type="primary">rpn-6.2</name>
    <name type="ORF">F59B2.5</name>
</gene>
<evidence type="ECO:0000250" key="1"/>
<evidence type="ECO:0000255" key="2">
    <source>
        <dbReference type="PROSITE-ProRule" id="PRU01185"/>
    </source>
</evidence>
<evidence type="ECO:0000305" key="3"/>
<sequence>MSATPVTLKAVQSEVSAQTAKSSEAEVKRCEDLILSYSRQLAKEKDITGIRTLVESIRSFYDLVGKARASKLIRDIVEHALTIDQGVGPALDHGKKEKIDLLTNCIGWATSNKREFLRRSLQARLIRLYNDIRDFTNAQKLAQDLSKELKKLEDRELLIEVSVEESKSSFNLNNLAKAKTALLTAKTNTNSAFASPQLQASVDMQSGVLYSAEERDYKTSFSYFYEAFEGFASIGDKINATSALKYMILCKIMLNETEQLAGLLAAKEIVAYQKSPRIIAIRSMADAFRKRSLKDFVKALAEHKIELVEDKVVAVHSQNLERNMLEKEISRVIEPYSEIELSYIARVIGMTVPPVERAIARMILDKKLMGSIDQHGDTVVVYPKADAANQFTRSLKTIRELTKTVDVSYSRTKHFK</sequence>
<reference key="1">
    <citation type="journal article" date="1994" name="Nature">
        <title>2.2 Mb of contiguous nucleotide sequence from chromosome III of C. elegans.</title>
        <authorList>
            <person name="Wilson R."/>
            <person name="Ainscough R."/>
            <person name="Anderson K."/>
            <person name="Baynes C."/>
            <person name="Berks M."/>
            <person name="Bonfield J."/>
            <person name="Burton J."/>
            <person name="Connell M."/>
            <person name="Copsey T."/>
            <person name="Cooper J."/>
            <person name="Coulson A."/>
            <person name="Craxton M."/>
            <person name="Dear S."/>
            <person name="Du Z."/>
            <person name="Durbin R."/>
            <person name="Favello A."/>
            <person name="Fraser A."/>
            <person name="Fulton L."/>
            <person name="Gardner A."/>
            <person name="Green P."/>
            <person name="Hawkins T."/>
            <person name="Hillier L."/>
            <person name="Jier M."/>
            <person name="Johnston L."/>
            <person name="Jones M."/>
            <person name="Kershaw J."/>
            <person name="Kirsten J."/>
            <person name="Laisster N."/>
            <person name="Latreille P."/>
            <person name="Lightning J."/>
            <person name="Lloyd C."/>
            <person name="Mortimore B."/>
            <person name="O'Callaghan M."/>
            <person name="Parsons J."/>
            <person name="Percy C."/>
            <person name="Rifken L."/>
            <person name="Roopra A."/>
            <person name="Saunders D."/>
            <person name="Shownkeen R."/>
            <person name="Sims M."/>
            <person name="Smaldon N."/>
            <person name="Smith A."/>
            <person name="Smith M."/>
            <person name="Sonnhammer E."/>
            <person name="Staden R."/>
            <person name="Sulston J."/>
            <person name="Thierry-Mieg J."/>
            <person name="Thomas K."/>
            <person name="Vaudin M."/>
            <person name="Vaughan K."/>
            <person name="Waterston R."/>
            <person name="Watson A."/>
            <person name="Weinstock L."/>
            <person name="Wilkinson-Sproat J."/>
            <person name="Wohldman P."/>
        </authorList>
    </citation>
    <scope>NUCLEOTIDE SEQUENCE [LARGE SCALE GENOMIC DNA]</scope>
    <scope>ALTERNATIVE SPLICING</scope>
    <source>
        <strain>Bristol N2</strain>
    </source>
</reference>
<reference key="2">
    <citation type="journal article" date="1998" name="Science">
        <title>Genome sequence of the nematode C. elegans: a platform for investigating biology.</title>
        <authorList>
            <consortium name="The C. elegans sequencing consortium"/>
        </authorList>
    </citation>
    <scope>NUCLEOTIDE SEQUENCE [LARGE SCALE GENOMIC DNA]</scope>
    <scope>ALTERNATIVE SPLICING</scope>
    <source>
        <strain>Bristol N2</strain>
    </source>
</reference>